<reference key="1">
    <citation type="journal article" date="2010" name="J. Bacteriol.">
        <title>Genome sequence of the dioxin-mineralizing bacterium Sphingomonas wittichii RW1.</title>
        <authorList>
            <person name="Miller T.R."/>
            <person name="Delcher A.L."/>
            <person name="Salzberg S.L."/>
            <person name="Saunders E."/>
            <person name="Detter J.C."/>
            <person name="Halden R.U."/>
        </authorList>
    </citation>
    <scope>NUCLEOTIDE SEQUENCE [LARGE SCALE GENOMIC DNA]</scope>
    <source>
        <strain>DSM 6014 / CCUG 31198 / JCM 15750 / NBRC 105917 / EY 4224 / RW1</strain>
    </source>
</reference>
<name>HIS1_RHIWR</name>
<keyword id="KW-0028">Amino-acid biosynthesis</keyword>
<keyword id="KW-0067">ATP-binding</keyword>
<keyword id="KW-0963">Cytoplasm</keyword>
<keyword id="KW-0328">Glycosyltransferase</keyword>
<keyword id="KW-0368">Histidine biosynthesis</keyword>
<keyword id="KW-0547">Nucleotide-binding</keyword>
<keyword id="KW-1185">Reference proteome</keyword>
<keyword id="KW-0808">Transferase</keyword>
<gene>
    <name evidence="1" type="primary">hisG</name>
    <name type="ordered locus">Swit_2777</name>
</gene>
<feature type="chain" id="PRO_1000063308" description="ATP phosphoribosyltransferase">
    <location>
        <begin position="1"/>
        <end position="221"/>
    </location>
</feature>
<dbReference type="EC" id="2.4.2.17" evidence="1"/>
<dbReference type="EMBL" id="CP000699">
    <property type="protein sequence ID" value="ABQ69132.1"/>
    <property type="molecule type" value="Genomic_DNA"/>
</dbReference>
<dbReference type="SMR" id="A5VA16"/>
<dbReference type="STRING" id="392499.Swit_2777"/>
<dbReference type="PaxDb" id="392499-Swit_2777"/>
<dbReference type="KEGG" id="swi:Swit_2777"/>
<dbReference type="eggNOG" id="COG0040">
    <property type="taxonomic scope" value="Bacteria"/>
</dbReference>
<dbReference type="HOGENOM" id="CLU_038115_2_0_5"/>
<dbReference type="OrthoDB" id="9806435at2"/>
<dbReference type="UniPathway" id="UPA00031">
    <property type="reaction ID" value="UER00006"/>
</dbReference>
<dbReference type="Proteomes" id="UP000001989">
    <property type="component" value="Chromosome"/>
</dbReference>
<dbReference type="GO" id="GO:0005737">
    <property type="term" value="C:cytoplasm"/>
    <property type="evidence" value="ECO:0007669"/>
    <property type="project" value="UniProtKB-SubCell"/>
</dbReference>
<dbReference type="GO" id="GO:0005524">
    <property type="term" value="F:ATP binding"/>
    <property type="evidence" value="ECO:0007669"/>
    <property type="project" value="UniProtKB-KW"/>
</dbReference>
<dbReference type="GO" id="GO:0003879">
    <property type="term" value="F:ATP phosphoribosyltransferase activity"/>
    <property type="evidence" value="ECO:0007669"/>
    <property type="project" value="UniProtKB-UniRule"/>
</dbReference>
<dbReference type="GO" id="GO:0000105">
    <property type="term" value="P:L-histidine biosynthetic process"/>
    <property type="evidence" value="ECO:0007669"/>
    <property type="project" value="UniProtKB-UniRule"/>
</dbReference>
<dbReference type="CDD" id="cd13595">
    <property type="entry name" value="PBP2_HisGs"/>
    <property type="match status" value="1"/>
</dbReference>
<dbReference type="FunFam" id="3.40.190.10:FF:000008">
    <property type="entry name" value="ATP phosphoribosyltransferase"/>
    <property type="match status" value="1"/>
</dbReference>
<dbReference type="Gene3D" id="3.40.190.10">
    <property type="entry name" value="Periplasmic binding protein-like II"/>
    <property type="match status" value="2"/>
</dbReference>
<dbReference type="HAMAP" id="MF_01018">
    <property type="entry name" value="HisG_Short"/>
    <property type="match status" value="1"/>
</dbReference>
<dbReference type="InterPro" id="IPR013820">
    <property type="entry name" value="ATP_PRibTrfase_cat"/>
</dbReference>
<dbReference type="InterPro" id="IPR018198">
    <property type="entry name" value="ATP_PRibTrfase_CS"/>
</dbReference>
<dbReference type="InterPro" id="IPR001348">
    <property type="entry name" value="ATP_PRibTrfase_HisG"/>
</dbReference>
<dbReference type="InterPro" id="IPR024893">
    <property type="entry name" value="ATP_PRibTrfase_HisG_short"/>
</dbReference>
<dbReference type="NCBIfam" id="TIGR00070">
    <property type="entry name" value="hisG"/>
    <property type="match status" value="1"/>
</dbReference>
<dbReference type="PANTHER" id="PTHR21403:SF8">
    <property type="entry name" value="ATP PHOSPHORIBOSYLTRANSFERASE"/>
    <property type="match status" value="1"/>
</dbReference>
<dbReference type="PANTHER" id="PTHR21403">
    <property type="entry name" value="ATP PHOSPHORIBOSYLTRANSFERASE ATP-PRTASE"/>
    <property type="match status" value="1"/>
</dbReference>
<dbReference type="Pfam" id="PF01634">
    <property type="entry name" value="HisG"/>
    <property type="match status" value="1"/>
</dbReference>
<dbReference type="SUPFAM" id="SSF53850">
    <property type="entry name" value="Periplasmic binding protein-like II"/>
    <property type="match status" value="1"/>
</dbReference>
<dbReference type="PROSITE" id="PS01316">
    <property type="entry name" value="ATP_P_PHORIBOSYLTR"/>
    <property type="match status" value="1"/>
</dbReference>
<proteinExistence type="inferred from homology"/>
<accession>A5VA16</accession>
<organism>
    <name type="scientific">Rhizorhabdus wittichii (strain DSM 6014 / CCUG 31198 / JCM 15750 / NBRC 105917 / EY 4224 / RW1)</name>
    <name type="common">Sphingomonas wittichii</name>
    <dbReference type="NCBI Taxonomy" id="392499"/>
    <lineage>
        <taxon>Bacteria</taxon>
        <taxon>Pseudomonadati</taxon>
        <taxon>Pseudomonadota</taxon>
        <taxon>Alphaproteobacteria</taxon>
        <taxon>Sphingomonadales</taxon>
        <taxon>Sphingomonadaceae</taxon>
        <taxon>Rhizorhabdus</taxon>
    </lineage>
</organism>
<protein>
    <recommendedName>
        <fullName evidence="1">ATP phosphoribosyltransferase</fullName>
        <shortName evidence="1">ATP-PRT</shortName>
        <shortName evidence="1">ATP-PRTase</shortName>
        <ecNumber evidence="1">2.4.2.17</ecNumber>
    </recommendedName>
</protein>
<evidence type="ECO:0000255" key="1">
    <source>
        <dbReference type="HAMAP-Rule" id="MF_01018"/>
    </source>
</evidence>
<sequence>MTAQIIIAVPKGRILKEVLPLFAALGIVPEPAFGDEDSRLLRFATNRSDIGLIRVRAFDVATFVAHGAAQLGIVGSDVLMEFDYSELYAPVDLAIGHCRISVAEPVAMAAGDDPREWSHVRVATKYPNITRRHFEARGVQAECVKLNGAMEIAPVLGLSSRIVDLVSTGRTLKDNGLAEVETIAEVSSRLIVNRAAFKTRAGEIGPLVEGFRRAVEDKNAA</sequence>
<comment type="function">
    <text evidence="1">Catalyzes the condensation of ATP and 5-phosphoribose 1-diphosphate to form N'-(5'-phosphoribosyl)-ATP (PR-ATP). Has a crucial role in the pathway because the rate of histidine biosynthesis seems to be controlled primarily by regulation of HisG enzymatic activity.</text>
</comment>
<comment type="catalytic activity">
    <reaction evidence="1">
        <text>1-(5-phospho-beta-D-ribosyl)-ATP + diphosphate = 5-phospho-alpha-D-ribose 1-diphosphate + ATP</text>
        <dbReference type="Rhea" id="RHEA:18473"/>
        <dbReference type="ChEBI" id="CHEBI:30616"/>
        <dbReference type="ChEBI" id="CHEBI:33019"/>
        <dbReference type="ChEBI" id="CHEBI:58017"/>
        <dbReference type="ChEBI" id="CHEBI:73183"/>
        <dbReference type="EC" id="2.4.2.17"/>
    </reaction>
</comment>
<comment type="pathway">
    <text evidence="1">Amino-acid biosynthesis; L-histidine biosynthesis; L-histidine from 5-phospho-alpha-D-ribose 1-diphosphate: step 1/9.</text>
</comment>
<comment type="subunit">
    <text evidence="1">Heteromultimer composed of HisG and HisZ subunits.</text>
</comment>
<comment type="subcellular location">
    <subcellularLocation>
        <location evidence="1">Cytoplasm</location>
    </subcellularLocation>
</comment>
<comment type="domain">
    <text>Lacks the C-terminal regulatory region which is replaced by HisZ.</text>
</comment>
<comment type="similarity">
    <text evidence="1">Belongs to the ATP phosphoribosyltransferase family. Short subfamily.</text>
</comment>